<dbReference type="EC" id="2.1.2.1" evidence="1"/>
<dbReference type="EMBL" id="AM942444">
    <property type="protein sequence ID" value="CAQ04564.1"/>
    <property type="molecule type" value="Genomic_DNA"/>
</dbReference>
<dbReference type="RefSeq" id="WP_012359856.1">
    <property type="nucleotide sequence ID" value="NC_010545.1"/>
</dbReference>
<dbReference type="SMR" id="B1VFM5"/>
<dbReference type="STRING" id="504474.cu0604"/>
<dbReference type="GeneID" id="60603380"/>
<dbReference type="KEGG" id="cur:cu0604"/>
<dbReference type="eggNOG" id="COG0112">
    <property type="taxonomic scope" value="Bacteria"/>
</dbReference>
<dbReference type="HOGENOM" id="CLU_022477_2_1_11"/>
<dbReference type="UniPathway" id="UPA00193"/>
<dbReference type="UniPathway" id="UPA00288">
    <property type="reaction ID" value="UER01023"/>
</dbReference>
<dbReference type="Proteomes" id="UP000001727">
    <property type="component" value="Chromosome"/>
</dbReference>
<dbReference type="GO" id="GO:0005829">
    <property type="term" value="C:cytosol"/>
    <property type="evidence" value="ECO:0007669"/>
    <property type="project" value="TreeGrafter"/>
</dbReference>
<dbReference type="GO" id="GO:0004372">
    <property type="term" value="F:glycine hydroxymethyltransferase activity"/>
    <property type="evidence" value="ECO:0007669"/>
    <property type="project" value="UniProtKB-UniRule"/>
</dbReference>
<dbReference type="GO" id="GO:0030170">
    <property type="term" value="F:pyridoxal phosphate binding"/>
    <property type="evidence" value="ECO:0007669"/>
    <property type="project" value="UniProtKB-UniRule"/>
</dbReference>
<dbReference type="GO" id="GO:0019264">
    <property type="term" value="P:glycine biosynthetic process from serine"/>
    <property type="evidence" value="ECO:0007669"/>
    <property type="project" value="UniProtKB-UniRule"/>
</dbReference>
<dbReference type="GO" id="GO:0035999">
    <property type="term" value="P:tetrahydrofolate interconversion"/>
    <property type="evidence" value="ECO:0007669"/>
    <property type="project" value="UniProtKB-UniRule"/>
</dbReference>
<dbReference type="CDD" id="cd00378">
    <property type="entry name" value="SHMT"/>
    <property type="match status" value="1"/>
</dbReference>
<dbReference type="FunFam" id="3.40.640.10:FF:000001">
    <property type="entry name" value="Serine hydroxymethyltransferase"/>
    <property type="match status" value="1"/>
</dbReference>
<dbReference type="Gene3D" id="3.90.1150.10">
    <property type="entry name" value="Aspartate Aminotransferase, domain 1"/>
    <property type="match status" value="1"/>
</dbReference>
<dbReference type="Gene3D" id="3.40.640.10">
    <property type="entry name" value="Type I PLP-dependent aspartate aminotransferase-like (Major domain)"/>
    <property type="match status" value="1"/>
</dbReference>
<dbReference type="HAMAP" id="MF_00051">
    <property type="entry name" value="SHMT"/>
    <property type="match status" value="1"/>
</dbReference>
<dbReference type="InterPro" id="IPR015424">
    <property type="entry name" value="PyrdxlP-dep_Trfase"/>
</dbReference>
<dbReference type="InterPro" id="IPR015421">
    <property type="entry name" value="PyrdxlP-dep_Trfase_major"/>
</dbReference>
<dbReference type="InterPro" id="IPR015422">
    <property type="entry name" value="PyrdxlP-dep_Trfase_small"/>
</dbReference>
<dbReference type="InterPro" id="IPR001085">
    <property type="entry name" value="Ser_HO-MeTrfase"/>
</dbReference>
<dbReference type="InterPro" id="IPR049943">
    <property type="entry name" value="Ser_HO-MeTrfase-like"/>
</dbReference>
<dbReference type="InterPro" id="IPR019798">
    <property type="entry name" value="Ser_HO-MeTrfase_PLP_BS"/>
</dbReference>
<dbReference type="InterPro" id="IPR039429">
    <property type="entry name" value="SHMT-like_dom"/>
</dbReference>
<dbReference type="NCBIfam" id="NF000586">
    <property type="entry name" value="PRK00011.1"/>
    <property type="match status" value="1"/>
</dbReference>
<dbReference type="PANTHER" id="PTHR11680">
    <property type="entry name" value="SERINE HYDROXYMETHYLTRANSFERASE"/>
    <property type="match status" value="1"/>
</dbReference>
<dbReference type="PANTHER" id="PTHR11680:SF35">
    <property type="entry name" value="SERINE HYDROXYMETHYLTRANSFERASE 1"/>
    <property type="match status" value="1"/>
</dbReference>
<dbReference type="Pfam" id="PF00464">
    <property type="entry name" value="SHMT"/>
    <property type="match status" value="1"/>
</dbReference>
<dbReference type="PIRSF" id="PIRSF000412">
    <property type="entry name" value="SHMT"/>
    <property type="match status" value="1"/>
</dbReference>
<dbReference type="SUPFAM" id="SSF53383">
    <property type="entry name" value="PLP-dependent transferases"/>
    <property type="match status" value="1"/>
</dbReference>
<dbReference type="PROSITE" id="PS00096">
    <property type="entry name" value="SHMT"/>
    <property type="match status" value="1"/>
</dbReference>
<comment type="function">
    <text evidence="1">Catalyzes the reversible interconversion of serine and glycine with tetrahydrofolate (THF) serving as the one-carbon carrier. This reaction serves as the major source of one-carbon groups required for the biosynthesis of purines, thymidylate, methionine, and other important biomolecules. Also exhibits THF-independent aldolase activity toward beta-hydroxyamino acids, producing glycine and aldehydes, via a retro-aldol mechanism.</text>
</comment>
<comment type="catalytic activity">
    <reaction evidence="1">
        <text>(6R)-5,10-methylene-5,6,7,8-tetrahydrofolate + glycine + H2O = (6S)-5,6,7,8-tetrahydrofolate + L-serine</text>
        <dbReference type="Rhea" id="RHEA:15481"/>
        <dbReference type="ChEBI" id="CHEBI:15377"/>
        <dbReference type="ChEBI" id="CHEBI:15636"/>
        <dbReference type="ChEBI" id="CHEBI:33384"/>
        <dbReference type="ChEBI" id="CHEBI:57305"/>
        <dbReference type="ChEBI" id="CHEBI:57453"/>
        <dbReference type="EC" id="2.1.2.1"/>
    </reaction>
</comment>
<comment type="cofactor">
    <cofactor evidence="1">
        <name>pyridoxal 5'-phosphate</name>
        <dbReference type="ChEBI" id="CHEBI:597326"/>
    </cofactor>
</comment>
<comment type="pathway">
    <text evidence="1">One-carbon metabolism; tetrahydrofolate interconversion.</text>
</comment>
<comment type="pathway">
    <text evidence="1">Amino-acid biosynthesis; glycine biosynthesis; glycine from L-serine: step 1/1.</text>
</comment>
<comment type="subunit">
    <text evidence="1">Homodimer.</text>
</comment>
<comment type="subcellular location">
    <subcellularLocation>
        <location evidence="1">Cytoplasm</location>
    </subcellularLocation>
</comment>
<comment type="similarity">
    <text evidence="1">Belongs to the SHMT family.</text>
</comment>
<protein>
    <recommendedName>
        <fullName evidence="1">Serine hydroxymethyltransferase</fullName>
        <shortName evidence="1">SHMT</shortName>
        <shortName evidence="1">Serine methylase</shortName>
        <ecNumber evidence="1">2.1.2.1</ecNumber>
    </recommendedName>
</protein>
<sequence>MSDSPQTIQHNVPLAELDPDVARAIDGELARQRNTLEMIASENFVPRAVLQAQGSVLTNKYAEGYPGRRYYGGCEHVDVIEDLARDRAKQVFGAEFANVQPHAGAQANAAVLMALASPRDKILGLSLAHGGHLTHGMHLNFSGKLYEAIAYEVDPETMRIDMDKVREQALKEKPTVIIAGWSAYPRHQDFAAFRSIADEVGAKLWVDMAHFAGLVAAGLHPSPVPHADVVSTTVHKTLGGPRSGLILAKQEWAKKLNSAVFPGQQGGPLMHAVAAKAVAMKVAQTEEFRDRQARTLEGAKILAERLSAADTKGAGVEVLTGGTDVHLVLADLRHSELDGQQAEDLLHEVGITVNRNAVPFDPRPPMVTSGLRIGTPALASRGLDTAAFTEVADVIGTALAQGKNADVEALRARVSKVAEDFPLYEGLEDWKLV</sequence>
<accession>B1VFM5</accession>
<name>GLYA_CORU7</name>
<gene>
    <name evidence="1" type="primary">glyA</name>
    <name type="ordered locus">cu0604</name>
</gene>
<reference key="1">
    <citation type="journal article" date="2008" name="J. Biotechnol.">
        <title>The lifestyle of Corynebacterium urealyticum derived from its complete genome sequence established by pyrosequencing.</title>
        <authorList>
            <person name="Tauch A."/>
            <person name="Trost E."/>
            <person name="Tilker A."/>
            <person name="Ludewig U."/>
            <person name="Schneiker S."/>
            <person name="Goesmann A."/>
            <person name="Arnold W."/>
            <person name="Bekel T."/>
            <person name="Brinkrolf K."/>
            <person name="Brune I."/>
            <person name="Goetker S."/>
            <person name="Kalinowski J."/>
            <person name="Kamp P.-B."/>
            <person name="Lobo F.P."/>
            <person name="Viehoever P."/>
            <person name="Weisshaar B."/>
            <person name="Soriano F."/>
            <person name="Droege M."/>
            <person name="Puehler A."/>
        </authorList>
    </citation>
    <scope>NUCLEOTIDE SEQUENCE [LARGE SCALE GENOMIC DNA]</scope>
    <source>
        <strain>ATCC 43042 / DSM 7109</strain>
    </source>
</reference>
<proteinExistence type="inferred from homology"/>
<feature type="chain" id="PRO_0000369915" description="Serine hydroxymethyltransferase">
    <location>
        <begin position="1"/>
        <end position="433"/>
    </location>
</feature>
<feature type="binding site" evidence="1">
    <location>
        <position position="127"/>
    </location>
    <ligand>
        <name>(6S)-5,6,7,8-tetrahydrofolate</name>
        <dbReference type="ChEBI" id="CHEBI:57453"/>
    </ligand>
</feature>
<feature type="binding site" evidence="1">
    <location>
        <begin position="131"/>
        <end position="133"/>
    </location>
    <ligand>
        <name>(6S)-5,6,7,8-tetrahydrofolate</name>
        <dbReference type="ChEBI" id="CHEBI:57453"/>
    </ligand>
</feature>
<feature type="site" description="Plays an important role in substrate specificity" evidence="1">
    <location>
        <position position="235"/>
    </location>
</feature>
<feature type="modified residue" description="N6-(pyridoxal phosphate)lysine" evidence="1">
    <location>
        <position position="236"/>
    </location>
</feature>
<keyword id="KW-0028">Amino-acid biosynthesis</keyword>
<keyword id="KW-0963">Cytoplasm</keyword>
<keyword id="KW-0554">One-carbon metabolism</keyword>
<keyword id="KW-0663">Pyridoxal phosphate</keyword>
<keyword id="KW-1185">Reference proteome</keyword>
<keyword id="KW-0808">Transferase</keyword>
<evidence type="ECO:0000255" key="1">
    <source>
        <dbReference type="HAMAP-Rule" id="MF_00051"/>
    </source>
</evidence>
<organism>
    <name type="scientific">Corynebacterium urealyticum (strain ATCC 43042 / DSM 7109)</name>
    <dbReference type="NCBI Taxonomy" id="504474"/>
    <lineage>
        <taxon>Bacteria</taxon>
        <taxon>Bacillati</taxon>
        <taxon>Actinomycetota</taxon>
        <taxon>Actinomycetes</taxon>
        <taxon>Mycobacteriales</taxon>
        <taxon>Corynebacteriaceae</taxon>
        <taxon>Corynebacterium</taxon>
    </lineage>
</organism>